<sequence length="911" mass="106365">MDELIVDFNNLDSNLSIDDAKKYLQNLISRDKAIEINLKQHIKLKDDLEIQMESFDNEIPEYLTLSLKKSNELNNRISSTCQLAENLSSKVKKLDNIRERIKDTLKKVDDIIDLKNCIEGVQISIEKEDYEGAAFHINRYLSIDKSVLEDNSSEKLSIAEKKLLSMIESKYQQSLQDNDQKQVLRFCILYVPLEKPLEGIDKYCNYLKNQSKKLDAMITHYRNYIQSPKTIKPISAVSVITKIFEHFAAIIEDDLPIIKSEFGVLHCPHFILNITQQCDYYSSKVYDSFNDQFQTNKNVNDILVYKQQLEKSQQSIQDSGSGSGGGGGKVSEKIDPRNFAQFLDETSMISKATKFYEKYLIRKEHLIKSDIYQYYSKLEKEKIEKLNSIKSLIITNSRNQQLQQLPQPQQLQQQQQYQQQLQTQENKENELLKKLTQEKDKQMKQTIYSNVTKQKMNQLLGNYILLEEYFMVESVNKAIQMDSLQSLDFENNINSSNSNSSSVSGSGIGGSNTLSSSNSQQSQQSTDNTMIDFIFFVLQKSLQRAIDSHSIQTLNVICNRLCRILSQTRDNLKRIFREYIIRSSSKSVMDYQSSLQVLNNLETSSEYIIRLKKEFDSKCLKIYPIYKLDEKSKDLESSSTSSTSIEQQQQQQQQQQQQQQQQQQQQQQQQQQQEQQQENEFESNLKDDIIIIRNLLNLELKKKQENDRDQVNILSNEFLNCSKSFNKILQEEIESLFKSVQPRLKNVLNQFTLVNYEINQLEYDNNDINDPFVLQFTLEISHFFKPFQEHLSNTNYDYLVHQTIQFILKKIEGITIQQKKFTLLGGLQFGKDLRAISTYFTKISQSTIRDKFSKLNQISSFLILESISEVEDHWNENRNSPTWKLSSSEVQKILMTRIDFNHDQILKLKFN</sequence>
<dbReference type="EMBL" id="AAFI02000003">
    <property type="protein sequence ID" value="EAL73433.1"/>
    <property type="molecule type" value="Genomic_DNA"/>
</dbReference>
<dbReference type="RefSeq" id="XP_647448.1">
    <property type="nucleotide sequence ID" value="XM_642356.1"/>
</dbReference>
<dbReference type="SMR" id="Q55FT5"/>
<dbReference type="FunCoup" id="Q55FT5">
    <property type="interactions" value="151"/>
</dbReference>
<dbReference type="STRING" id="44689.Q55FT5"/>
<dbReference type="PaxDb" id="44689-DDB0237854"/>
<dbReference type="EnsemblProtists" id="EAL73433">
    <property type="protein sequence ID" value="EAL73433"/>
    <property type="gene ID" value="DDB_G0267960"/>
</dbReference>
<dbReference type="GeneID" id="8616255"/>
<dbReference type="KEGG" id="ddi:DDB_G0267960"/>
<dbReference type="dictyBase" id="DDB_G0267960">
    <property type="gene designation" value="cog4"/>
</dbReference>
<dbReference type="VEuPathDB" id="AmoebaDB:DDB_G0267960"/>
<dbReference type="eggNOG" id="KOG0412">
    <property type="taxonomic scope" value="Eukaryota"/>
</dbReference>
<dbReference type="HOGENOM" id="CLU_014853_2_0_1"/>
<dbReference type="InParanoid" id="Q55FT5"/>
<dbReference type="OMA" id="RASECQQ"/>
<dbReference type="PhylomeDB" id="Q55FT5"/>
<dbReference type="Reactome" id="R-DDI-6807878">
    <property type="pathway name" value="COPI-mediated anterograde transport"/>
</dbReference>
<dbReference type="Reactome" id="R-DDI-6811438">
    <property type="pathway name" value="Intra-Golgi traffic"/>
</dbReference>
<dbReference type="PRO" id="PR:Q55FT5"/>
<dbReference type="Proteomes" id="UP000002195">
    <property type="component" value="Chromosome 1"/>
</dbReference>
<dbReference type="GO" id="GO:0000139">
    <property type="term" value="C:Golgi membrane"/>
    <property type="evidence" value="ECO:0007669"/>
    <property type="project" value="UniProtKB-SubCell"/>
</dbReference>
<dbReference type="GO" id="GO:0015031">
    <property type="term" value="P:protein transport"/>
    <property type="evidence" value="ECO:0007669"/>
    <property type="project" value="UniProtKB-KW"/>
</dbReference>
<dbReference type="Gene3D" id="1.20.58.1970">
    <property type="match status" value="1"/>
</dbReference>
<dbReference type="Gene3D" id="1.10.287.1060">
    <property type="entry name" value="ESAT-6-like"/>
    <property type="match status" value="1"/>
</dbReference>
<dbReference type="InterPro" id="IPR048682">
    <property type="entry name" value="COG4"/>
</dbReference>
<dbReference type="InterPro" id="IPR048684">
    <property type="entry name" value="COG4_C"/>
</dbReference>
<dbReference type="InterPro" id="IPR013167">
    <property type="entry name" value="COG4_M"/>
</dbReference>
<dbReference type="InterPro" id="IPR048680">
    <property type="entry name" value="COG4_N"/>
</dbReference>
<dbReference type="PANTHER" id="PTHR24016">
    <property type="entry name" value="CONSERVED OLIGOMERIC GOLGI COMPLEX SUBUNIT 4"/>
    <property type="match status" value="1"/>
</dbReference>
<dbReference type="PANTHER" id="PTHR24016:SF0">
    <property type="entry name" value="CONSERVED OLIGOMERIC GOLGI COMPLEX SUBUNIT 4"/>
    <property type="match status" value="1"/>
</dbReference>
<dbReference type="Pfam" id="PF20662">
    <property type="entry name" value="COG4_C"/>
    <property type="match status" value="1"/>
</dbReference>
<dbReference type="Pfam" id="PF08318">
    <property type="entry name" value="COG4_m"/>
    <property type="match status" value="1"/>
</dbReference>
<dbReference type="Pfam" id="PF20663">
    <property type="entry name" value="COG4_N"/>
    <property type="match status" value="1"/>
</dbReference>
<dbReference type="SMART" id="SM00762">
    <property type="entry name" value="Cog4"/>
    <property type="match status" value="1"/>
</dbReference>
<evidence type="ECO:0000250" key="1">
    <source>
        <dbReference type="UniProtKB" id="Q9H9E3"/>
    </source>
</evidence>
<evidence type="ECO:0000256" key="2">
    <source>
        <dbReference type="SAM" id="MobiDB-lite"/>
    </source>
</evidence>
<evidence type="ECO:0000305" key="3"/>
<organism>
    <name type="scientific">Dictyostelium discoideum</name>
    <name type="common">Social amoeba</name>
    <dbReference type="NCBI Taxonomy" id="44689"/>
    <lineage>
        <taxon>Eukaryota</taxon>
        <taxon>Amoebozoa</taxon>
        <taxon>Evosea</taxon>
        <taxon>Eumycetozoa</taxon>
        <taxon>Dictyostelia</taxon>
        <taxon>Dictyosteliales</taxon>
        <taxon>Dictyosteliaceae</taxon>
        <taxon>Dictyostelium</taxon>
    </lineage>
</organism>
<gene>
    <name type="primary">cog4</name>
    <name type="ORF">DDB_G0267960</name>
</gene>
<name>COG4_DICDI</name>
<comment type="function">
    <text evidence="1">Required for normal Golgi function.</text>
</comment>
<comment type="subunit">
    <text evidence="1">Component of the conserved oligomeric Golgi complex which is composed of eight different subunits and is required for normal Golgi morphology and localization.</text>
</comment>
<comment type="subcellular location">
    <subcellularLocation>
        <location evidence="1">Golgi apparatus membrane</location>
        <topology evidence="1">Peripheral membrane protein</topology>
    </subcellularLocation>
</comment>
<comment type="similarity">
    <text evidence="3">Belongs to the COG4 family.</text>
</comment>
<accession>Q55FT5</accession>
<protein>
    <recommendedName>
        <fullName>Conserved oligomeric Golgi complex subunit 4</fullName>
        <shortName>COG complex subunit 4</shortName>
    </recommendedName>
    <alternativeName>
        <fullName>Component of oligomeric Golgi complex 4</fullName>
    </alternativeName>
</protein>
<feature type="chain" id="PRO_0000339134" description="Conserved oligomeric Golgi complex subunit 4">
    <location>
        <begin position="1"/>
        <end position="911"/>
    </location>
</feature>
<feature type="region of interest" description="Disordered" evidence="2">
    <location>
        <begin position="496"/>
        <end position="523"/>
    </location>
</feature>
<keyword id="KW-0333">Golgi apparatus</keyword>
<keyword id="KW-0472">Membrane</keyword>
<keyword id="KW-0653">Protein transport</keyword>
<keyword id="KW-1185">Reference proteome</keyword>
<keyword id="KW-0813">Transport</keyword>
<reference key="1">
    <citation type="journal article" date="2005" name="Nature">
        <title>The genome of the social amoeba Dictyostelium discoideum.</title>
        <authorList>
            <person name="Eichinger L."/>
            <person name="Pachebat J.A."/>
            <person name="Gloeckner G."/>
            <person name="Rajandream M.A."/>
            <person name="Sucgang R."/>
            <person name="Berriman M."/>
            <person name="Song J."/>
            <person name="Olsen R."/>
            <person name="Szafranski K."/>
            <person name="Xu Q."/>
            <person name="Tunggal B."/>
            <person name="Kummerfeld S."/>
            <person name="Madera M."/>
            <person name="Konfortov B.A."/>
            <person name="Rivero F."/>
            <person name="Bankier A.T."/>
            <person name="Lehmann R."/>
            <person name="Hamlin N."/>
            <person name="Davies R."/>
            <person name="Gaudet P."/>
            <person name="Fey P."/>
            <person name="Pilcher K."/>
            <person name="Chen G."/>
            <person name="Saunders D."/>
            <person name="Sodergren E.J."/>
            <person name="Davis P."/>
            <person name="Kerhornou A."/>
            <person name="Nie X."/>
            <person name="Hall N."/>
            <person name="Anjard C."/>
            <person name="Hemphill L."/>
            <person name="Bason N."/>
            <person name="Farbrother P."/>
            <person name="Desany B."/>
            <person name="Just E."/>
            <person name="Morio T."/>
            <person name="Rost R."/>
            <person name="Churcher C.M."/>
            <person name="Cooper J."/>
            <person name="Haydock S."/>
            <person name="van Driessche N."/>
            <person name="Cronin A."/>
            <person name="Goodhead I."/>
            <person name="Muzny D.M."/>
            <person name="Mourier T."/>
            <person name="Pain A."/>
            <person name="Lu M."/>
            <person name="Harper D."/>
            <person name="Lindsay R."/>
            <person name="Hauser H."/>
            <person name="James K.D."/>
            <person name="Quiles M."/>
            <person name="Madan Babu M."/>
            <person name="Saito T."/>
            <person name="Buchrieser C."/>
            <person name="Wardroper A."/>
            <person name="Felder M."/>
            <person name="Thangavelu M."/>
            <person name="Johnson D."/>
            <person name="Knights A."/>
            <person name="Loulseged H."/>
            <person name="Mungall K.L."/>
            <person name="Oliver K."/>
            <person name="Price C."/>
            <person name="Quail M.A."/>
            <person name="Urushihara H."/>
            <person name="Hernandez J."/>
            <person name="Rabbinowitsch E."/>
            <person name="Steffen D."/>
            <person name="Sanders M."/>
            <person name="Ma J."/>
            <person name="Kohara Y."/>
            <person name="Sharp S."/>
            <person name="Simmonds M.N."/>
            <person name="Spiegler S."/>
            <person name="Tivey A."/>
            <person name="Sugano S."/>
            <person name="White B."/>
            <person name="Walker D."/>
            <person name="Woodward J.R."/>
            <person name="Winckler T."/>
            <person name="Tanaka Y."/>
            <person name="Shaulsky G."/>
            <person name="Schleicher M."/>
            <person name="Weinstock G.M."/>
            <person name="Rosenthal A."/>
            <person name="Cox E.C."/>
            <person name="Chisholm R.L."/>
            <person name="Gibbs R.A."/>
            <person name="Loomis W.F."/>
            <person name="Platzer M."/>
            <person name="Kay R.R."/>
            <person name="Williams J.G."/>
            <person name="Dear P.H."/>
            <person name="Noegel A.A."/>
            <person name="Barrell B.G."/>
            <person name="Kuspa A."/>
        </authorList>
    </citation>
    <scope>NUCLEOTIDE SEQUENCE [LARGE SCALE GENOMIC DNA]</scope>
    <source>
        <strain>AX4</strain>
    </source>
</reference>
<proteinExistence type="inferred from homology"/>